<protein>
    <recommendedName>
        <fullName>Structural polyprotein</fullName>
    </recommendedName>
    <alternativeName>
        <fullName>p130</fullName>
    </alternativeName>
    <component>
        <recommendedName>
            <fullName>Capsid protein</fullName>
            <ecNumber evidence="2">3.4.21.90</ecNumber>
        </recommendedName>
        <alternativeName>
            <fullName>Coat protein</fullName>
            <shortName>C</shortName>
        </alternativeName>
    </component>
    <component>
        <recommendedName>
            <fullName>Precursor of protein E3/E2</fullName>
        </recommendedName>
        <alternativeName>
            <fullName>p62</fullName>
        </alternativeName>
        <alternativeName>
            <fullName>pE2</fullName>
        </alternativeName>
    </component>
    <component>
        <recommendedName>
            <fullName>Assembly protein E3</fullName>
        </recommendedName>
    </component>
    <component>
        <recommendedName>
            <fullName>Spike glycoprotein E2</fullName>
        </recommendedName>
        <alternativeName>
            <fullName>E2 envelope glycoprotein</fullName>
        </alternativeName>
    </component>
    <component>
        <recommendedName>
            <fullName>6K protein</fullName>
        </recommendedName>
    </component>
    <component>
        <recommendedName>
            <fullName>Spike glycoprotein E1</fullName>
        </recommendedName>
        <alternativeName>
            <fullName>E1 envelope glycoprotein</fullName>
        </alternativeName>
    </component>
</protein>
<dbReference type="EC" id="3.4.21.90" evidence="2"/>
<dbReference type="EMBL" id="L04599">
    <property type="protein sequence ID" value="AAA42989.1"/>
    <property type="status" value="ALT_SEQ"/>
    <property type="molecule type" value="mRNA"/>
</dbReference>
<dbReference type="EMBL" id="L04599">
    <property type="protein sequence ID" value="AAA42990.1"/>
    <property type="molecule type" value="mRNA"/>
</dbReference>
<dbReference type="EMBL" id="L04599">
    <property type="protein sequence ID" value="AAA42991.1"/>
    <property type="status" value="ALT_SEQ"/>
    <property type="molecule type" value="mRNA"/>
</dbReference>
<dbReference type="EMBL" id="L04599">
    <property type="protein sequence ID" value="AAA42992.1"/>
    <property type="status" value="ALT_SEQ"/>
    <property type="molecule type" value="mRNA"/>
</dbReference>
<dbReference type="EMBL" id="L04599">
    <property type="protein sequence ID" value="AAA42993.1"/>
    <property type="status" value="ALT_SEQ"/>
    <property type="molecule type" value="mRNA"/>
</dbReference>
<dbReference type="EMBL" id="L04599">
    <property type="protein sequence ID" value="AAA42994.1"/>
    <property type="status" value="ALT_SEQ"/>
    <property type="molecule type" value="mRNA"/>
</dbReference>
<dbReference type="PIR" id="JQ1979">
    <property type="entry name" value="JQ1979"/>
</dbReference>
<dbReference type="SMR" id="P36331"/>
<dbReference type="GO" id="GO:0030430">
    <property type="term" value="C:host cell cytoplasm"/>
    <property type="evidence" value="ECO:0007669"/>
    <property type="project" value="UniProtKB-SubCell"/>
</dbReference>
<dbReference type="GO" id="GO:0042025">
    <property type="term" value="C:host cell nucleus"/>
    <property type="evidence" value="ECO:0007669"/>
    <property type="project" value="UniProtKB-SubCell"/>
</dbReference>
<dbReference type="GO" id="GO:0020002">
    <property type="term" value="C:host cell plasma membrane"/>
    <property type="evidence" value="ECO:0007669"/>
    <property type="project" value="UniProtKB-SubCell"/>
</dbReference>
<dbReference type="GO" id="GO:0016020">
    <property type="term" value="C:membrane"/>
    <property type="evidence" value="ECO:0007669"/>
    <property type="project" value="UniProtKB-KW"/>
</dbReference>
<dbReference type="GO" id="GO:0039619">
    <property type="term" value="C:T=4 icosahedral viral capsid"/>
    <property type="evidence" value="ECO:0007669"/>
    <property type="project" value="UniProtKB-KW"/>
</dbReference>
<dbReference type="GO" id="GO:0019031">
    <property type="term" value="C:viral envelope"/>
    <property type="evidence" value="ECO:0007669"/>
    <property type="project" value="UniProtKB-KW"/>
</dbReference>
<dbReference type="GO" id="GO:0055036">
    <property type="term" value="C:virion membrane"/>
    <property type="evidence" value="ECO:0007669"/>
    <property type="project" value="UniProtKB-SubCell"/>
</dbReference>
<dbReference type="GO" id="GO:0003723">
    <property type="term" value="F:RNA binding"/>
    <property type="evidence" value="ECO:0007669"/>
    <property type="project" value="UniProtKB-KW"/>
</dbReference>
<dbReference type="GO" id="GO:0004252">
    <property type="term" value="F:serine-type endopeptidase activity"/>
    <property type="evidence" value="ECO:0007669"/>
    <property type="project" value="InterPro"/>
</dbReference>
<dbReference type="GO" id="GO:0005198">
    <property type="term" value="F:structural molecule activity"/>
    <property type="evidence" value="ECO:0007669"/>
    <property type="project" value="InterPro"/>
</dbReference>
<dbReference type="GO" id="GO:0075512">
    <property type="term" value="P:clathrin-dependent endocytosis of virus by host cell"/>
    <property type="evidence" value="ECO:0007669"/>
    <property type="project" value="UniProtKB-KW"/>
</dbReference>
<dbReference type="GO" id="GO:0039654">
    <property type="term" value="P:fusion of virus membrane with host endosome membrane"/>
    <property type="evidence" value="ECO:0007669"/>
    <property type="project" value="UniProtKB-KW"/>
</dbReference>
<dbReference type="GO" id="GO:0006508">
    <property type="term" value="P:proteolysis"/>
    <property type="evidence" value="ECO:0007669"/>
    <property type="project" value="UniProtKB-KW"/>
</dbReference>
<dbReference type="GO" id="GO:0039657">
    <property type="term" value="P:symbiont-mediated suppression of host gene expression"/>
    <property type="evidence" value="ECO:0007669"/>
    <property type="project" value="UniProtKB-KW"/>
</dbReference>
<dbReference type="GO" id="GO:0039722">
    <property type="term" value="P:symbiont-mediated suppression of host toll-like receptor signaling pathway"/>
    <property type="evidence" value="ECO:0000250"/>
    <property type="project" value="UniProtKB"/>
</dbReference>
<dbReference type="GO" id="GO:0019062">
    <property type="term" value="P:virion attachment to host cell"/>
    <property type="evidence" value="ECO:0007669"/>
    <property type="project" value="UniProtKB-KW"/>
</dbReference>
<dbReference type="FunFam" id="2.40.10.10:FF:000075">
    <property type="entry name" value="Structural polyprotein"/>
    <property type="match status" value="1"/>
</dbReference>
<dbReference type="FunFam" id="2.40.10.10:FF:000076">
    <property type="entry name" value="Structural polyprotein"/>
    <property type="match status" value="1"/>
</dbReference>
<dbReference type="FunFam" id="2.60.40.350:FF:000002">
    <property type="entry name" value="Structural polyprotein"/>
    <property type="match status" value="1"/>
</dbReference>
<dbReference type="FunFam" id="2.60.98.10:FF:000002">
    <property type="entry name" value="Structural polyprotein"/>
    <property type="match status" value="1"/>
</dbReference>
<dbReference type="FunFam" id="2.60.98.10:FF:000003">
    <property type="entry name" value="Structural polyprotein"/>
    <property type="match status" value="1"/>
</dbReference>
<dbReference type="Gene3D" id="1.10.287.2230">
    <property type="match status" value="1"/>
</dbReference>
<dbReference type="Gene3D" id="2.60.40.350">
    <property type="match status" value="1"/>
</dbReference>
<dbReference type="Gene3D" id="2.60.40.3200">
    <property type="entry name" value="Alphavirus E2 glycoprotein, A domain"/>
    <property type="match status" value="1"/>
</dbReference>
<dbReference type="Gene3D" id="2.60.40.4310">
    <property type="entry name" value="Alphavirus E2 glycoprotein, domain B"/>
    <property type="match status" value="1"/>
</dbReference>
<dbReference type="Gene3D" id="2.60.40.2400">
    <property type="entry name" value="Alphavirus E2 glycoprotein, domain C"/>
    <property type="match status" value="1"/>
</dbReference>
<dbReference type="Gene3D" id="2.60.98.10">
    <property type="entry name" value="Tick-borne Encephalitis virus Glycoprotein, domain 1"/>
    <property type="match status" value="3"/>
</dbReference>
<dbReference type="Gene3D" id="2.40.10.10">
    <property type="entry name" value="Trypsin-like serine proteases"/>
    <property type="match status" value="2"/>
</dbReference>
<dbReference type="InterPro" id="IPR002548">
    <property type="entry name" value="Alpha_E1_glycop"/>
</dbReference>
<dbReference type="InterPro" id="IPR000936">
    <property type="entry name" value="Alpha_E2_glycop"/>
</dbReference>
<dbReference type="InterPro" id="IPR002533">
    <property type="entry name" value="Alpha_E3_glycop"/>
</dbReference>
<dbReference type="InterPro" id="IPR042304">
    <property type="entry name" value="Alphavir_E2_A"/>
</dbReference>
<dbReference type="InterPro" id="IPR042305">
    <property type="entry name" value="Alphavir_E2_B"/>
</dbReference>
<dbReference type="InterPro" id="IPR042306">
    <property type="entry name" value="Alphavir_E2_C"/>
</dbReference>
<dbReference type="InterPro" id="IPR000336">
    <property type="entry name" value="Flavivir/Alphavir_Ig-like_sf"/>
</dbReference>
<dbReference type="InterPro" id="IPR036253">
    <property type="entry name" value="Glycoprot_cen/dimer_sf"/>
</dbReference>
<dbReference type="InterPro" id="IPR038055">
    <property type="entry name" value="Glycoprot_E_dimer_dom"/>
</dbReference>
<dbReference type="InterPro" id="IPR014756">
    <property type="entry name" value="Ig_E-set"/>
</dbReference>
<dbReference type="InterPro" id="IPR009003">
    <property type="entry name" value="Peptidase_S1_PA"/>
</dbReference>
<dbReference type="InterPro" id="IPR043504">
    <property type="entry name" value="Peptidase_S1_PA_chymotrypsin"/>
</dbReference>
<dbReference type="InterPro" id="IPR000930">
    <property type="entry name" value="Peptidase_S3"/>
</dbReference>
<dbReference type="Pfam" id="PF01589">
    <property type="entry name" value="Alpha_E1_glycop"/>
    <property type="match status" value="1"/>
</dbReference>
<dbReference type="Pfam" id="PF00943">
    <property type="entry name" value="Alpha_E2_glycop"/>
    <property type="match status" value="1"/>
</dbReference>
<dbReference type="Pfam" id="PF01563">
    <property type="entry name" value="Alpha_E3_glycop"/>
    <property type="match status" value="1"/>
</dbReference>
<dbReference type="Pfam" id="PF00944">
    <property type="entry name" value="Peptidase_S3"/>
    <property type="match status" value="1"/>
</dbReference>
<dbReference type="PRINTS" id="PR00798">
    <property type="entry name" value="TOGAVIRIN"/>
</dbReference>
<dbReference type="SUPFAM" id="SSF81296">
    <property type="entry name" value="E set domains"/>
    <property type="match status" value="1"/>
</dbReference>
<dbReference type="SUPFAM" id="SSF50494">
    <property type="entry name" value="Trypsin-like serine proteases"/>
    <property type="match status" value="1"/>
</dbReference>
<dbReference type="SUPFAM" id="SSF56983">
    <property type="entry name" value="Viral glycoprotein, central and dimerisation domains"/>
    <property type="match status" value="1"/>
</dbReference>
<dbReference type="PROSITE" id="PS51690">
    <property type="entry name" value="ALPHAVIRUS_CP"/>
    <property type="match status" value="1"/>
</dbReference>
<name>POLS_EEVVM</name>
<evidence type="ECO:0000250" key="1"/>
<evidence type="ECO:0000250" key="2">
    <source>
        <dbReference type="UniProtKB" id="P03315"/>
    </source>
</evidence>
<evidence type="ECO:0000250" key="3">
    <source>
        <dbReference type="UniProtKB" id="P03316"/>
    </source>
</evidence>
<evidence type="ECO:0000250" key="4">
    <source>
        <dbReference type="UniProtKB" id="P08768"/>
    </source>
</evidence>
<evidence type="ECO:0000250" key="5">
    <source>
        <dbReference type="UniProtKB" id="P09592"/>
    </source>
</evidence>
<evidence type="ECO:0000250" key="6">
    <source>
        <dbReference type="UniProtKB" id="P13897"/>
    </source>
</evidence>
<evidence type="ECO:0000250" key="7">
    <source>
        <dbReference type="UniProtKB" id="P27284"/>
    </source>
</evidence>
<evidence type="ECO:0000250" key="8">
    <source>
        <dbReference type="UniProtKB" id="P36329"/>
    </source>
</evidence>
<evidence type="ECO:0000250" key="9">
    <source>
        <dbReference type="UniProtKB" id="Q5XXP3"/>
    </source>
</evidence>
<evidence type="ECO:0000250" key="10">
    <source>
        <dbReference type="UniProtKB" id="Q5Y388"/>
    </source>
</evidence>
<evidence type="ECO:0000250" key="11">
    <source>
        <dbReference type="UniProtKB" id="Q86925"/>
    </source>
</evidence>
<evidence type="ECO:0000250" key="12">
    <source>
        <dbReference type="UniProtKB" id="Q8JUX5"/>
    </source>
</evidence>
<evidence type="ECO:0000255" key="13"/>
<evidence type="ECO:0000255" key="14">
    <source>
        <dbReference type="PROSITE-ProRule" id="PRU01027"/>
    </source>
</evidence>
<evidence type="ECO:0000256" key="15">
    <source>
        <dbReference type="SAM" id="MobiDB-lite"/>
    </source>
</evidence>
<evidence type="ECO:0000305" key="16"/>
<organism>
    <name type="scientific">Venezuelan equine encephalitis virus (strain Mena II)</name>
    <name type="common">VEEV</name>
    <dbReference type="NCBI Taxonomy" id="36384"/>
    <lineage>
        <taxon>Viruses</taxon>
        <taxon>Riboviria</taxon>
        <taxon>Orthornavirae</taxon>
        <taxon>Kitrinoviricota</taxon>
        <taxon>Alsuviricetes</taxon>
        <taxon>Martellivirales</taxon>
        <taxon>Togaviridae</taxon>
        <taxon>Alphavirus</taxon>
        <taxon>Venezuelan equine encephalitis virus</taxon>
    </lineage>
</organism>
<organismHost>
    <name type="scientific">Bos taurus</name>
    <name type="common">Bovine</name>
    <dbReference type="NCBI Taxonomy" id="9913"/>
</organismHost>
<organismHost>
    <name type="scientific">Didelphis marsupialis</name>
    <name type="common">Southern opossum</name>
    <dbReference type="NCBI Taxonomy" id="9268"/>
</organismHost>
<organismHost>
    <name type="scientific">Equus asinus</name>
    <name type="common">Donkey</name>
    <name type="synonym">Equus africanus asinus</name>
    <dbReference type="NCBI Taxonomy" id="9793"/>
</organismHost>
<organismHost>
    <name type="scientific">Equus caballus</name>
    <name type="common">Horse</name>
    <dbReference type="NCBI Taxonomy" id="9796"/>
</organismHost>
<organismHost>
    <name type="scientific">Homo sapiens</name>
    <name type="common">Human</name>
    <dbReference type="NCBI Taxonomy" id="9606"/>
</organismHost>
<organismHost>
    <name type="scientific">Melanoconion</name>
    <dbReference type="NCBI Taxonomy" id="53535"/>
</organismHost>
<organismHost>
    <name type="scientific">Philander opossum</name>
    <name type="common">Gray four-eyed opossum</name>
    <dbReference type="NCBI Taxonomy" id="9272"/>
</organismHost>
<organismHost>
    <name type="scientific">Proechimys</name>
    <dbReference type="NCBI Taxonomy" id="10162"/>
</organismHost>
<organismHost>
    <name type="scientific">Sigmodon hispidus</name>
    <name type="common">Hispid cotton rat</name>
    <dbReference type="NCBI Taxonomy" id="42415"/>
</organismHost>
<keyword id="KW-0167">Capsid protein</keyword>
<keyword id="KW-1165">Clathrin-mediated endocytosis of virus by host</keyword>
<keyword id="KW-0165">Cleavage on pair of basic residues</keyword>
<keyword id="KW-1015">Disulfide bond</keyword>
<keyword id="KW-1262">Eukaryotic host gene expression shutoff by virus</keyword>
<keyword id="KW-1191">Eukaryotic host transcription shutoff by virus</keyword>
<keyword id="KW-1170">Fusion of virus membrane with host endosomal membrane</keyword>
<keyword id="KW-1168">Fusion of virus membrane with host membrane</keyword>
<keyword id="KW-0325">Glycoprotein</keyword>
<keyword id="KW-1032">Host cell membrane</keyword>
<keyword id="KW-1035">Host cytoplasm</keyword>
<keyword id="KW-1038">Host endoplasmic reticulum</keyword>
<keyword id="KW-1190">Host gene expression shutoff by virus</keyword>
<keyword id="KW-1040">Host Golgi apparatus</keyword>
<keyword id="KW-1043">Host membrane</keyword>
<keyword id="KW-1048">Host nucleus</keyword>
<keyword id="KW-0945">Host-virus interaction</keyword>
<keyword id="KW-0378">Hydrolase</keyword>
<keyword id="KW-0407">Ion channel</keyword>
<keyword id="KW-0406">Ion transport</keyword>
<keyword id="KW-0449">Lipoprotein</keyword>
<keyword id="KW-0472">Membrane</keyword>
<keyword id="KW-0564">Palmitate</keyword>
<keyword id="KW-0597">Phosphoprotein</keyword>
<keyword id="KW-0645">Protease</keyword>
<keyword id="KW-0694">RNA-binding</keyword>
<keyword id="KW-0720">Serine protease</keyword>
<keyword id="KW-1144">T=4 icosahedral capsid protein</keyword>
<keyword id="KW-0812">Transmembrane</keyword>
<keyword id="KW-1133">Transmembrane helix</keyword>
<keyword id="KW-0813">Transport</keyword>
<keyword id="KW-1161">Viral attachment to host cell</keyword>
<keyword id="KW-1234">Viral attachment to host entry receptor</keyword>
<keyword id="KW-0261">Viral envelope protein</keyword>
<keyword id="KW-1182">Viral ion channel</keyword>
<keyword id="KW-1162">Viral penetration into host cytoplasm</keyword>
<keyword id="KW-0946">Virion</keyword>
<keyword id="KW-1164">Virus endocytosis by host</keyword>
<keyword id="KW-1160">Virus entry into host cell</keyword>
<proteinExistence type="evidence at transcript level"/>
<accession>P36331</accession>
<accession>Q66587</accession>
<accession>Q66588</accession>
<accession>Q66589</accession>
<accession>Q66590</accession>
<accession>Q66591</accession>
<feature type="chain" id="PRO_0000041266" description="Capsid protein">
    <location>
        <begin position="1"/>
        <end position="274"/>
    </location>
</feature>
<feature type="chain" id="PRO_0000234321" description="Precursor of protein E3/E2">
    <location>
        <begin position="275"/>
        <end position="756"/>
    </location>
</feature>
<feature type="chain" id="PRO_0000041267" description="Assembly protein E3">
    <location>
        <begin position="275"/>
        <end position="333"/>
    </location>
</feature>
<feature type="chain" id="PRO_0000041268" description="Spike glycoprotein E2">
    <location>
        <begin position="334"/>
        <end position="756"/>
    </location>
</feature>
<feature type="chain" id="PRO_0000041269" description="6K protein">
    <location>
        <begin position="757"/>
        <end position="812"/>
    </location>
</feature>
<feature type="chain" id="PRO_0000041270" description="Spike glycoprotein E1">
    <location>
        <begin position="813"/>
        <end position="1254"/>
    </location>
</feature>
<feature type="topological domain" description="Extracellular" evidence="13">
    <location>
        <begin position="275"/>
        <end position="700"/>
    </location>
</feature>
<feature type="transmembrane region" description="Helical" evidence="13">
    <location>
        <begin position="701"/>
        <end position="721"/>
    </location>
</feature>
<feature type="topological domain" description="Cytoplasmic" evidence="13">
    <location>
        <begin position="722"/>
        <end position="756"/>
    </location>
</feature>
<feature type="topological domain" description="Extracellular" evidence="13">
    <location>
        <begin position="757"/>
        <end position="771"/>
    </location>
</feature>
<feature type="transmembrane region" description="Helical" evidence="13">
    <location>
        <begin position="772"/>
        <end position="790"/>
    </location>
</feature>
<feature type="transmembrane region" description="Helical" evidence="13">
    <location>
        <begin position="791"/>
        <end position="811"/>
    </location>
</feature>
<feature type="topological domain" description="Extracellular" evidence="13">
    <location>
        <begin position="812"/>
        <end position="1224"/>
    </location>
</feature>
<feature type="transmembrane region" description="Helical" evidence="13">
    <location>
        <begin position="1225"/>
        <end position="1245"/>
    </location>
</feature>
<feature type="topological domain" description="Cytoplasmic" evidence="13">
    <location>
        <begin position="1246"/>
        <end position="1254"/>
    </location>
</feature>
<feature type="domain" description="Peptidase S3" evidence="14">
    <location>
        <begin position="125"/>
        <end position="274"/>
    </location>
</feature>
<feature type="region of interest" description="Necessary for nucleocapsid assembly and virus assembly" evidence="5">
    <location>
        <begin position="1"/>
        <end position="33"/>
    </location>
</feature>
<feature type="region of interest" description="Host transcription inhibition" evidence="5">
    <location>
        <begin position="33"/>
        <end position="68"/>
    </location>
</feature>
<feature type="region of interest" description="Disordered" evidence="15">
    <location>
        <begin position="48"/>
        <end position="119"/>
    </location>
</feature>
<feature type="region of interest" description="Binding to the viral RNA" evidence="7">
    <location>
        <begin position="91"/>
        <end position="126"/>
    </location>
</feature>
<feature type="region of interest" description="Ribosome-binding" evidence="7">
    <location>
        <begin position="111"/>
        <end position="125"/>
    </location>
</feature>
<feature type="region of interest" description="Interaction with spike glycoprotein E2" evidence="3">
    <location>
        <begin position="167"/>
        <end position="172"/>
    </location>
</feature>
<feature type="region of interest" description="Interaction with spike glycoprotein E2" evidence="3">
    <location>
        <begin position="259"/>
        <end position="263"/>
    </location>
</feature>
<feature type="region of interest" description="Functions as an uncleaved signal peptide for the precursor of protein E3/E2" evidence="2">
    <location>
        <begin position="275"/>
        <end position="286"/>
    </location>
</feature>
<feature type="region of interest" description="Interaction with the capsid protein" evidence="3">
    <location>
        <begin position="724"/>
        <end position="728"/>
    </location>
</feature>
<feature type="region of interest" description="Transient transmembrane before p62-6K protein processing" evidence="13">
    <location>
        <begin position="729"/>
        <end position="749"/>
    </location>
</feature>
<feature type="region of interest" description="E1 fusion peptide loop" evidence="12">
    <location>
        <begin position="896"/>
        <end position="913"/>
    </location>
</feature>
<feature type="short sequence motif" description="Supraphysiological nuclear export signal" evidence="5">
    <location>
        <begin position="41"/>
        <end position="48"/>
    </location>
</feature>
<feature type="short sequence motif" description="Nuclear localization signal" evidence="5">
    <location>
        <begin position="64"/>
        <end position="68"/>
    </location>
</feature>
<feature type="compositionally biased region" description="Basic residues" evidence="15">
    <location>
        <begin position="79"/>
        <end position="93"/>
    </location>
</feature>
<feature type="compositionally biased region" description="Basic residues" evidence="15">
    <location>
        <begin position="102"/>
        <end position="117"/>
    </location>
</feature>
<feature type="active site" description="Charge relay system" evidence="14">
    <location>
        <position position="151"/>
    </location>
</feature>
<feature type="active site" description="Charge relay system" evidence="14">
    <location>
        <position position="173"/>
    </location>
</feature>
<feature type="active site" description="Charge relay system" evidence="14">
    <location>
        <position position="225"/>
    </location>
</feature>
<feature type="site" description="Involved in dimerization of the capsid protein" evidence="11">
    <location>
        <position position="199"/>
    </location>
</feature>
<feature type="site" description="Involved in dimerization of the capsid protein" evidence="11">
    <location>
        <position position="232"/>
    </location>
</feature>
<feature type="site" description="Cleavage; by autolysis" evidence="2">
    <location>
        <begin position="274"/>
        <end position="275"/>
    </location>
</feature>
<feature type="site" description="Cleavage; by host furin" evidence="2">
    <location>
        <begin position="333"/>
        <end position="334"/>
    </location>
</feature>
<feature type="site" description="Cleavage; by host signal peptidase" evidence="2">
    <location>
        <begin position="756"/>
        <end position="757"/>
    </location>
</feature>
<feature type="site" description="Cleavage; by host signal peptidase" evidence="2">
    <location>
        <begin position="812"/>
        <end position="813"/>
    </location>
</feature>
<feature type="modified residue" description="Phosphothreonine" evidence="5">
    <location>
        <position position="93"/>
    </location>
</feature>
<feature type="modified residue" description="Phosphoserine" evidence="5">
    <location>
        <position position="123"/>
    </location>
</feature>
<feature type="modified residue" description="Phosphothreonine" evidence="5">
    <location>
        <position position="126"/>
    </location>
</feature>
<feature type="lipid moiety-binding region" description="S-palmitoyl cysteine; by host" evidence="3">
    <location>
        <position position="729"/>
    </location>
</feature>
<feature type="lipid moiety-binding region" description="S-palmitoyl cysteine; by host" evidence="10">
    <location>
        <position position="749"/>
    </location>
</feature>
<feature type="lipid moiety-binding region" description="S-palmitoyl cysteine; by host" evidence="10">
    <location>
        <position position="750"/>
    </location>
</feature>
<feature type="glycosylation site" description="N-linked (GlcNAc...) asparagine; by host" evidence="13">
    <location>
        <position position="285"/>
    </location>
</feature>
<feature type="glycosylation site" description="N-linked (GlcNAc...) asparagine; by host" evidence="13">
    <location>
        <position position="651"/>
    </location>
</feature>
<feature type="glycosylation site" description="N-linked (GlcNAc...) asparagine; by host" evidence="13">
    <location>
        <position position="946"/>
    </location>
</feature>
<feature type="glycosylation site" description="N-linked (GlcNAc...) asparagine; by host" evidence="10">
    <location>
        <position position="1082"/>
    </location>
</feature>
<feature type="disulfide bond" evidence="4">
    <location>
        <begin position="281"/>
        <end position="290"/>
    </location>
</feature>
<feature type="disulfide bond" evidence="6">
    <location>
        <begin position="352"/>
        <end position="456"/>
    </location>
</feature>
<feature type="disulfide bond" evidence="6">
    <location>
        <begin position="355"/>
        <end position="360"/>
    </location>
</feature>
<feature type="disulfide bond" evidence="6">
    <location>
        <begin position="423"/>
        <end position="437"/>
    </location>
</feature>
<feature type="disulfide bond" evidence="6">
    <location>
        <begin position="484"/>
        <end position="599"/>
    </location>
</feature>
<feature type="disulfide bond" evidence="6">
    <location>
        <begin position="533"/>
        <end position="559"/>
    </location>
</feature>
<feature type="disulfide bond" evidence="6">
    <location>
        <begin position="535"/>
        <end position="553"/>
    </location>
</feature>
<feature type="disulfide bond" evidence="9">
    <location>
        <begin position="729"/>
        <end position="750"/>
    </location>
</feature>
<feature type="disulfide bond" evidence="6">
    <location>
        <begin position="861"/>
        <end position="926"/>
    </location>
</feature>
<feature type="disulfide bond" evidence="6">
    <location>
        <begin position="874"/>
        <end position="906"/>
    </location>
</feature>
<feature type="disulfide bond" evidence="6">
    <location>
        <begin position="875"/>
        <end position="908"/>
    </location>
</feature>
<feature type="disulfide bond" evidence="6">
    <location>
        <begin position="880"/>
        <end position="890"/>
    </location>
</feature>
<feature type="disulfide bond" evidence="6">
    <location>
        <begin position="1071"/>
        <end position="1083"/>
    </location>
</feature>
<feature type="disulfide bond" evidence="6">
    <location>
        <begin position="1113"/>
        <end position="1188"/>
    </location>
</feature>
<feature type="disulfide bond" evidence="6">
    <location>
        <begin position="1118"/>
        <end position="1192"/>
    </location>
</feature>
<feature type="disulfide bond" evidence="1">
    <location>
        <begin position="1140"/>
        <end position="1182"/>
    </location>
</feature>
<sequence length="1254" mass="138343">MFPYQPMYPMQPMPFRNPFAAPRRPWFPRTDPFLAMQVQELARSMANLTFKQRRDVPPEGPPAKKKKKDTSQQGGRNQNGKKKNKLVKKKKKTGPPPQKTNGGKKKVNKKPGKRQRMVMKLESDKTFPIMLDGRINGYACVVGGKLFRPLHVEGKIDNDVLSSLKTKKASKYDLEYADVPQSMRADTFKYTHEKPQGYYSWHHGAVQYENGRFTVPKGVGAKGDSGRPILDNQGRVVAIVLGGVNEGSRTALSVVTWNEKGVTVKYTPENSEQWSLVTTMCLLANVTFPCSQPPICYDRKPAETLSMLSHNIDNPGYDELLEAVLKCPGRGKRSTEELFKEYKLTRPYMARCIRCAVGSCHSPIAIEAVRSEGHDGYVRLQTSSQYGLDPSGNLKGRTMRYDMHGTIEEIPLHQVSLHTSRPCHIIDGHGYFLLARCPAGDSITMEFKKESVTHSCSVPYEVKFNPVGRELYTHPPEHGAEQPCHVYAHDAQNRGAYVEMHLPGSEVDSTLLSTSGSSVHVTPPAGQSVLVECECGGTKISETINSAKQYSQCSKTAQCRAYRTQNDKWVYNSDKLPKAAGETLKGKLHVPFVLTEAKCTVPLAPEPIITFGFRSVSLKLHPKNPTFLTTRQLDGEPAYTHELITNPVVRNFSVTEKGWEFVWGNHPPQRYWSQETAPGNPHGLPHEVITHYYHRYPMSTILGLSICAAIVTTSIAASVWLFCKSRISCLTPYRLTPNARMPLCLAVLCCARTARAETTWESLDHLWNHNQQMFWSQLLIPLAALIVATRLLKCVCCVVPFLVVAGAVGAGAYEHATTMPNQVGIPYNTIVNRAGYAPLPISIVPTKVKLIPTVNLEYITCHYKTGMDSPAIKCCGTQECSPTYRPDEQCKVFSGVYPFMWGGAYCFCDTENTQISKAYVTKSEDCVTDHAQAYKAHTASVQAFLNITVGGHSTTAVVYVNGETPVNFNGVKLTAGPLSTAWSPFDKKIVQYAGEIYNYDFPEYGAGHAGAFGDIQARTISSSDVYANTNLVLQRPKAGAIHVPYTQAPSGYEQWKKDKPPSLKFTAPFGCEIYTNPIRAENCAVGSIPLAFDIPDALFTRVSETPTLSTAECTLNECVYSSDFGGIATVKYSASKSGKCAVHVPSGTATLKEAAVELAEQGSATIHFSTASIHPEFRLQICTSYVTCKGDCHPPKDHIVTHPQYHAQSFTAAVSKTAWTWLTSLLGGSAIIIIIGLVLATIVAMYVLTNQKHN</sequence>
<reference key="1">
    <citation type="journal article" date="1993" name="J. Gen. Virol.">
        <title>Molecular evidence that epizootic Venezuelan equine encephalitis (VEE) I-AB viruses are not evolutionary derivatives of enzootic VEE subtype I-E or II viruses.</title>
        <authorList>
            <person name="Sneider J.M."/>
            <person name="Kinney R.M."/>
            <person name="Tsuchiya K.R."/>
            <person name="Trent D.W."/>
        </authorList>
    </citation>
    <scope>NUCLEOTIDE SEQUENCE [MRNA]</scope>
</reference>
<comment type="function">
    <molecule>Capsid protein</molecule>
    <text evidence="2 3 5 7 8">Forms an icosahedral capsid with a T=4 symmetry composed of 240 copies of the capsid protein surrounded by a lipid membrane through which penetrate 80 spikes composed of trimers of E1-E2 heterodimers (By similarity). The capsid protein binds to the viral RNA genome at a site adjacent to a ribosome binding site for viral genome translation following genome release (By similarity). Possesses a protease activity that results in its autocatalytic cleavage from the nascent structural protein (By similarity). Following its self-cleavage, the capsid protein transiently associates with ribosomes, and within several minutes the protein binds to viral RNA and rapidly assembles into icosahedric core particles (By similarity). The resulting nucleocapsid eventually associates with the cytoplasmic domain of the spike glycoprotein E2 at the cell membrane, leading to budding and formation of mature virions (By similarity). In case of infection, new virions attach to target cells and after clathrin-mediated endocytosis their membrane fuses with the host endosomal membrane (By similarity). This leads to the release of the nucleocapsid into the cytoplasm, followed by an uncoating event necessary for the genomic RNA to become accessible (By similarity). The uncoating might be triggered by the interaction of capsid proteins with ribosomes (By similarity). Binding of ribosomes would release the genomic RNA since the same region is genomic RNA-binding and ribosome-binding (By similarity). Specifically inhibits interleukin-1 receptor-associated kinase 1/IRAK1-dependent signaling during viral entry, representing a means by which the alphaviruses may evade innate immune detection and activation prior to viral gene expression (By similarity). Inhibits host transcription (By similarity). Forms a tetrameric complex with XPO1/CRM1 and the nuclear import receptor importin (By similarity). This complex blocks the central channel of host nuclear pores thereby inhibiting the receptor-mediated nuclear transport and thus the host mRNA and rRNA transcription (By similarity). The inhibition of transcription is linked to a cytopathic effect on the host cell (By similarity).</text>
</comment>
<comment type="function">
    <molecule>Assembly protein E3</molecule>
    <text evidence="2">Provides the signal sequence for the translocation of the precursor of protein E3/E2 to the host endoplasmic reticulum. Furin-cleaved E3 remains associated with spike glycoprotein E1 and mediates pH protection of the latter during the transport via the secretory pathway. After virion release from the host cell, the assembly protein E3 is gradually released in the extracellular space.</text>
</comment>
<comment type="function">
    <molecule>Spike glycoprotein E2</molecule>
    <text evidence="2 5">Plays a role in viral attachment to target host cell, by binding to the cell receptor LDLRAD3 (By similarity). Synthesized as a p62 precursor which is processed by furin at the cell membrane just before virion budding, giving rise to E2-E1 heterodimer. The p62-E1 heterodimer is stable, whereas E2-E1 is unstable and dissociate at low pH. p62 is processed at the last step, presumably to avoid E1 fusion activation before its final export to cell surface. E2 C-terminus contains a transitory transmembrane that would be disrupted by palmitoylation, resulting in reorientation of the C-terminal tail from lumenal to cytoplasmic side. This step is critical since E2 C-terminus is involved in budding by interacting with capsid proteins. This release of E2 C-terminus in cytoplasm occurs lately in protein export, and precludes premature assembly of particles at the endoplasmic reticulum membrane.</text>
</comment>
<comment type="function">
    <molecule>6K protein</molecule>
    <text evidence="2 3">Acts as a viroporin that participates in virus glycoprotein processing and transport to the plasma membrane, cell permeabilization and budding of viral particles (By similarity). Disrupts the calcium homeostasis of the cell, probably at the endoplasmic reticulum level (By similarity). This leads to cytoplasmic calcium elevation (By similarity). Because of its lipophilic properties, the 6K protein is postulated to influence the selection of lipids that interact with the transmembrane domains of the glycoproteins, which, in turn, affects the deformability of the bilayer required for the extreme curvature that occurs as budding proceeds. Present in low amount in virions, about 3% compared to viral glycoproteins (By similarity).</text>
</comment>
<comment type="function">
    <molecule>Spike glycoprotein E1</molecule>
    <text evidence="3 5">Class II viral fusion protein. Fusion activity is inactive as long as E1 is bound to E2 in mature virion. After virus attachment to cell receptor LDLRAD3 and endocytosis, acidification of the endosome induce dissociation of E1/E2 heterodimer and concomitant trimerization of the E1 subunits (By similarity). This E1 trimer is fusion active, and promotes release of viral nucleocapsid in cytoplasm after endosome and viral membrane fusion. Efficient fusion requires the presence of cholesterol and sphingolipid in the target membrane (By similarity).</text>
</comment>
<comment type="catalytic activity">
    <reaction evidence="3">
        <text>Autocatalytic release of the core protein from the N-terminus of the togavirus structural polyprotein by hydrolysis of a -Trp-|-Ser- bond.</text>
        <dbReference type="EC" id="3.4.21.90"/>
    </reaction>
</comment>
<comment type="subunit">
    <molecule>Capsid protein</molecule>
    <text evidence="3 5 11 12">Homodimer (By similarity). Homomultimer (By similarity). Interacts with host karyopherin KPNA4; this interaction allows the nuclear import of the viral capsid protein (By similarity). Interacts with spike glycoprotein E2 (By similarity). Interacts with host IRAK1; the interaction leads to inhibition of IRAK1-dependent signaling (By similarity). Part of a tetrameric complex composed of host CRM1, host importin alpha/beta dimer and the viral capsid; this complex blocks the receptor-mediated transport through the nuclear pore (By similarity). Interacts with host phosphatase PPP1CA; this interaction dephosphorylates the capsid protein, which increases its ability to bind to the viral genome (By similarity).</text>
</comment>
<comment type="subunit">
    <molecule>Precursor of protein E3/E2</molecule>
    <text evidence="2 3 5">The precursor of protein E3/E2 and E1 form a heterodimer shortly after synthesis.</text>
</comment>
<comment type="subunit">
    <molecule>Spike glycoprotein E1</molecule>
    <text evidence="3 5 12">Interacts with spike glycoprotein E2 (By similarity). The precursor of protein E3/E2 and E1 form a heterodimer shortly after synthesis (By similarity). Processing of the precursor of protein E3/E2 into E2 and E3 results in a heterodimer of the spike glycoproteins E2 and E1 (By similarity). Spike at virion surface are constituted of three E2-E1 heterodimers (By similarity). After target cell attachment and endocytosis, E1 change conformation to form homotrimers (By similarity). Interacts with 6K protein (By similarity). Interacts with host LDLRAD3; this interaction mediates viral entry to the host cell (By similarity).</text>
</comment>
<comment type="subunit">
    <molecule>Spike glycoprotein E2</molecule>
    <text evidence="3 5">Interacts with spike glycoprotein E1 (By similarity). Processing of the precursor of protein E3/E2 into E2 and E3 results in a heterodimer of the spike glycoproteins E2 and E1 (By similarity). Spike at virion surface are constituted of a trimer of E2-E1 heterodimers (By similarity). Interacts with 6K protein (By similarity). Interacts with host LDLRAD3; this interaction mediates viral entry to the host cell (By similarity).</text>
</comment>
<comment type="subunit">
    <molecule>6K protein</molecule>
    <text evidence="3 9">Oligomer (By similarity). Interacts with spike glycoprotein E1. Interacts with spike glycoprotein E2 (By similarity).</text>
</comment>
<comment type="subcellular location">
    <molecule>Capsid protein</molecule>
    <subcellularLocation>
        <location evidence="3">Virion</location>
    </subcellularLocation>
    <subcellularLocation>
        <location evidence="5">Host cytoplasm</location>
    </subcellularLocation>
    <subcellularLocation>
        <location evidence="3">Host cell membrane</location>
    </subcellularLocation>
    <subcellularLocation>
        <location evidence="5">Host nucleus</location>
    </subcellularLocation>
</comment>
<comment type="subcellular location">
    <molecule>Spike glycoprotein E2</molecule>
    <subcellularLocation>
        <location evidence="12">Virion membrane</location>
        <topology evidence="13">Single-pass type I membrane protein</topology>
    </subcellularLocation>
    <subcellularLocation>
        <location evidence="3">Host cell membrane</location>
        <topology evidence="12">Single-pass type I membrane protein</topology>
    </subcellularLocation>
</comment>
<comment type="subcellular location">
    <molecule>6K protein</molecule>
    <subcellularLocation>
        <location evidence="3">Host cell membrane</location>
        <topology evidence="13">Multi-pass membrane protein</topology>
    </subcellularLocation>
    <subcellularLocation>
        <location evidence="3">Virion membrane</location>
        <topology evidence="13">Multi-pass membrane protein</topology>
    </subcellularLocation>
    <subcellularLocation>
        <location evidence="3">Host Golgi apparatus</location>
    </subcellularLocation>
    <subcellularLocation>
        <location>Host Golgi apparatus</location>
        <location>Host trans-Golgi network</location>
    </subcellularLocation>
    <subcellularLocation>
        <location evidence="3">Host endoplasmic reticulum</location>
    </subcellularLocation>
</comment>
<comment type="subcellular location">
    <molecule>Spike glycoprotein E1</molecule>
    <subcellularLocation>
        <location evidence="12">Virion membrane</location>
        <topology evidence="13">Single-pass type I membrane protein</topology>
    </subcellularLocation>
    <subcellularLocation>
        <location evidence="3 12">Host cell membrane</location>
        <topology evidence="13">Single-pass type I membrane protein</topology>
    </subcellularLocation>
</comment>
<comment type="domain">
    <text evidence="2">Structural polyprotein: As soon as the capsid protein has been autocleaved, an internal uncleaved signal peptide directs the remaining polyprotein to the endoplasmic reticulum.</text>
</comment>
<comment type="domain">
    <molecule>Capsid protein</molecule>
    <text evidence="3 5">The very N-terminus plays a role in the particle assembly process (By similarity). The N-terminus also contains a nuclear localization signal and a supraphysiological nuclear export signal (supraNES), which is an unusually strong NES that mediates host CRM1 binding in the absence of RanGTP and thus can bind CRM1, not only in the nucleus, but also in the cytoplasm (By similarity). The C-terminus functions as a protease during translation to cleave itself from the translating structural polyprotein (By similarity).</text>
</comment>
<comment type="PTM">
    <text evidence="2">Structural polyprotein: Specific enzymatic cleavages in vivo yield mature proteins. Capsid protein is auto-cleaved during polyprotein translation, unmasking a signal peptide at the N-terminus of the precursor of E3/E2. The remaining polyprotein is then targeted to the host endoplasmic reticulum, where host signal peptidase cleaves it into pE2, 6K and E1 proteins. pE2 is further processed to mature E3 and E2 by host furin in trans-Golgi vesicle.</text>
</comment>
<comment type="PTM">
    <molecule>Capsid protein</molecule>
    <text evidence="5">Phosphorylated on serine and threonine residues.</text>
</comment>
<comment type="PTM">
    <molecule>Spike glycoprotein E2</molecule>
    <text evidence="2">Palmitoylated via thioester bonds. These palmitoylations may induce disruption of the C-terminus transmembrane. This would result in the reorientation of E2 C-terminus from lumenal to cytoplasmic side.</text>
</comment>
<comment type="PTM">
    <molecule>Spike glycoprotein E1</molecule>
    <text evidence="2">N-glycosylated.</text>
</comment>
<comment type="PTM">
    <molecule>Spike glycoprotein E2</molecule>
    <text evidence="2">N-glycosylated.</text>
</comment>
<comment type="PTM">
    <molecule>Assembly protein E3</molecule>
    <text evidence="2">N-glycosylated.</text>
</comment>
<comment type="PTM">
    <molecule>6K protein</molecule>
    <text evidence="2">Palmitoylated via thioester bonds.</text>
</comment>
<comment type="miscellaneous">
    <text evidence="16">Belongs to the New World alphaviruses that can cause fatal encephalitis.</text>
</comment>
<comment type="miscellaneous">
    <text evidence="11">Structural polyprotein: Translated from a subgenomic RNA synthesized during togavirus replication.</text>
</comment>
<comment type="sequence caution" evidence="16">
    <conflict type="erroneous translation">
        <sequence resource="EMBL-CDS" id="AAA42989"/>
    </conflict>
    <text>Erroneous CDS prediction.</text>
</comment>
<comment type="sequence caution" evidence="16">
    <conflict type="erroneous translation">
        <sequence resource="EMBL-CDS" id="AAA42991"/>
    </conflict>
    <text>Erroneous CDS prediction.</text>
</comment>
<comment type="sequence caution" evidence="16">
    <conflict type="erroneous translation">
        <sequence resource="EMBL-CDS" id="AAA42992"/>
    </conflict>
    <text>Erroneous CDS prediction.</text>
</comment>
<comment type="sequence caution" evidence="16">
    <conflict type="erroneous translation">
        <sequence resource="EMBL-CDS" id="AAA42993"/>
    </conflict>
    <text>Erroneous CDS prediction.</text>
</comment>
<comment type="sequence caution" evidence="16">
    <conflict type="erroneous translation">
        <sequence resource="EMBL-CDS" id="AAA42994"/>
    </conflict>
    <text>Erroneous CDS prediction.</text>
</comment>